<gene>
    <name type="primary">bys</name>
    <name type="ORF">CG1430</name>
</gene>
<dbReference type="EMBL" id="AE014298">
    <property type="protein sequence ID" value="AAF46289.1"/>
    <property type="molecule type" value="Genomic_DNA"/>
</dbReference>
<dbReference type="EMBL" id="AY061176">
    <property type="protein sequence ID" value="AAL28724.1"/>
    <property type="molecule type" value="mRNA"/>
</dbReference>
<dbReference type="EMBL" id="L02076">
    <property type="protein sequence ID" value="AAA28401.1"/>
    <property type="molecule type" value="mRNA"/>
</dbReference>
<dbReference type="EMBL" id="L02074">
    <property type="protein sequence ID" value="AAD20894.1"/>
    <property type="molecule type" value="Genomic_DNA"/>
</dbReference>
<dbReference type="RefSeq" id="NP_511074.1">
    <property type="nucleotide sequence ID" value="NM_078519.3"/>
</dbReference>
<dbReference type="SMR" id="P51406"/>
<dbReference type="BioGRID" id="58175">
    <property type="interactions" value="4"/>
</dbReference>
<dbReference type="DIP" id="DIP-19855N"/>
<dbReference type="FunCoup" id="P51406">
    <property type="interactions" value="1123"/>
</dbReference>
<dbReference type="IntAct" id="P51406">
    <property type="interactions" value="8"/>
</dbReference>
<dbReference type="STRING" id="7227.FBpp0071046"/>
<dbReference type="iPTMnet" id="P51406"/>
<dbReference type="PaxDb" id="7227-FBpp0071046"/>
<dbReference type="DNASU" id="31701"/>
<dbReference type="EnsemblMetazoa" id="FBtr0071090">
    <property type="protein sequence ID" value="FBpp0071046"/>
    <property type="gene ID" value="FBgn0010292"/>
</dbReference>
<dbReference type="GeneID" id="31701"/>
<dbReference type="KEGG" id="dme:Dmel_CG1430"/>
<dbReference type="AGR" id="FB:FBgn0010292"/>
<dbReference type="CTD" id="31701"/>
<dbReference type="FlyBase" id="FBgn0010292">
    <property type="gene designation" value="bys"/>
</dbReference>
<dbReference type="VEuPathDB" id="VectorBase:FBgn0010292"/>
<dbReference type="eggNOG" id="KOG3871">
    <property type="taxonomic scope" value="Eukaryota"/>
</dbReference>
<dbReference type="GeneTree" id="ENSGT00390000007241"/>
<dbReference type="HOGENOM" id="CLU_029727_0_1_1"/>
<dbReference type="InParanoid" id="P51406"/>
<dbReference type="OMA" id="TKLPVIW"/>
<dbReference type="OrthoDB" id="2192561at2759"/>
<dbReference type="PhylomeDB" id="P51406"/>
<dbReference type="BioGRID-ORCS" id="31701">
    <property type="hits" value="1 hit in 1 CRISPR screen"/>
</dbReference>
<dbReference type="GenomeRNAi" id="31701"/>
<dbReference type="PRO" id="PR:P51406"/>
<dbReference type="Proteomes" id="UP000000803">
    <property type="component" value="Chromosome X"/>
</dbReference>
<dbReference type="Bgee" id="FBgn0010292">
    <property type="expression patterns" value="Expressed in adult enteroendocrine precursor cell in adult midgut (Drosophila) and 85 other cell types or tissues"/>
</dbReference>
<dbReference type="GO" id="GO:0005737">
    <property type="term" value="C:cytoplasm"/>
    <property type="evidence" value="ECO:0000318"/>
    <property type="project" value="GO_Central"/>
</dbReference>
<dbReference type="GO" id="GO:0005730">
    <property type="term" value="C:nucleolus"/>
    <property type="evidence" value="ECO:0000318"/>
    <property type="project" value="GO_Central"/>
</dbReference>
<dbReference type="GO" id="GO:0005634">
    <property type="term" value="C:nucleus"/>
    <property type="evidence" value="ECO:0000314"/>
    <property type="project" value="FlyBase"/>
</dbReference>
<dbReference type="GO" id="GO:0030688">
    <property type="term" value="C:preribosome, small subunit precursor"/>
    <property type="evidence" value="ECO:0000318"/>
    <property type="project" value="GO_Central"/>
</dbReference>
<dbReference type="GO" id="GO:0030515">
    <property type="term" value="F:snoRNA binding"/>
    <property type="evidence" value="ECO:0000318"/>
    <property type="project" value="GO_Central"/>
</dbReference>
<dbReference type="GO" id="GO:0006364">
    <property type="term" value="P:rRNA processing"/>
    <property type="evidence" value="ECO:0000318"/>
    <property type="project" value="GO_Central"/>
</dbReference>
<dbReference type="InterPro" id="IPR007955">
    <property type="entry name" value="Bystin"/>
</dbReference>
<dbReference type="PANTHER" id="PTHR12821">
    <property type="entry name" value="BYSTIN"/>
    <property type="match status" value="1"/>
</dbReference>
<dbReference type="PANTHER" id="PTHR12821:SF0">
    <property type="entry name" value="BYSTIN"/>
    <property type="match status" value="1"/>
</dbReference>
<dbReference type="Pfam" id="PF05291">
    <property type="entry name" value="Bystin"/>
    <property type="match status" value="1"/>
</dbReference>
<organism>
    <name type="scientific">Drosophila melanogaster</name>
    <name type="common">Fruit fly</name>
    <dbReference type="NCBI Taxonomy" id="7227"/>
    <lineage>
        <taxon>Eukaryota</taxon>
        <taxon>Metazoa</taxon>
        <taxon>Ecdysozoa</taxon>
        <taxon>Arthropoda</taxon>
        <taxon>Hexapoda</taxon>
        <taxon>Insecta</taxon>
        <taxon>Pterygota</taxon>
        <taxon>Neoptera</taxon>
        <taxon>Endopterygota</taxon>
        <taxon>Diptera</taxon>
        <taxon>Brachycera</taxon>
        <taxon>Muscomorpha</taxon>
        <taxon>Ephydroidea</taxon>
        <taxon>Drosophilidae</taxon>
        <taxon>Drosophila</taxon>
        <taxon>Sophophora</taxon>
    </lineage>
</organism>
<accession>P51406</accession>
<accession>Q9W3N3</accession>
<comment type="function">
    <text evidence="1">Required for processing of 20S pre-rRNA precursor and biogenesis of 40S ribosomal subunits.</text>
</comment>
<comment type="subcellular location">
    <subcellularLocation>
        <location evidence="1">Nucleus</location>
        <location evidence="1">Nucleolus</location>
    </subcellularLocation>
</comment>
<comment type="similarity">
    <text evidence="3">Belongs to the bystin family.</text>
</comment>
<proteinExistence type="evidence at protein level"/>
<reference key="1">
    <citation type="journal article" date="2000" name="Science">
        <title>The genome sequence of Drosophila melanogaster.</title>
        <authorList>
            <person name="Adams M.D."/>
            <person name="Celniker S.E."/>
            <person name="Holt R.A."/>
            <person name="Evans C.A."/>
            <person name="Gocayne J.D."/>
            <person name="Amanatides P.G."/>
            <person name="Scherer S.E."/>
            <person name="Li P.W."/>
            <person name="Hoskins R.A."/>
            <person name="Galle R.F."/>
            <person name="George R.A."/>
            <person name="Lewis S.E."/>
            <person name="Richards S."/>
            <person name="Ashburner M."/>
            <person name="Henderson S.N."/>
            <person name="Sutton G.G."/>
            <person name="Wortman J.R."/>
            <person name="Yandell M.D."/>
            <person name="Zhang Q."/>
            <person name="Chen L.X."/>
            <person name="Brandon R.C."/>
            <person name="Rogers Y.-H.C."/>
            <person name="Blazej R.G."/>
            <person name="Champe M."/>
            <person name="Pfeiffer B.D."/>
            <person name="Wan K.H."/>
            <person name="Doyle C."/>
            <person name="Baxter E.G."/>
            <person name="Helt G."/>
            <person name="Nelson C.R."/>
            <person name="Miklos G.L.G."/>
            <person name="Abril J.F."/>
            <person name="Agbayani A."/>
            <person name="An H.-J."/>
            <person name="Andrews-Pfannkoch C."/>
            <person name="Baldwin D."/>
            <person name="Ballew R.M."/>
            <person name="Basu A."/>
            <person name="Baxendale J."/>
            <person name="Bayraktaroglu L."/>
            <person name="Beasley E.M."/>
            <person name="Beeson K.Y."/>
            <person name="Benos P.V."/>
            <person name="Berman B.P."/>
            <person name="Bhandari D."/>
            <person name="Bolshakov S."/>
            <person name="Borkova D."/>
            <person name="Botchan M.R."/>
            <person name="Bouck J."/>
            <person name="Brokstein P."/>
            <person name="Brottier P."/>
            <person name="Burtis K.C."/>
            <person name="Busam D.A."/>
            <person name="Butler H."/>
            <person name="Cadieu E."/>
            <person name="Center A."/>
            <person name="Chandra I."/>
            <person name="Cherry J.M."/>
            <person name="Cawley S."/>
            <person name="Dahlke C."/>
            <person name="Davenport L.B."/>
            <person name="Davies P."/>
            <person name="de Pablos B."/>
            <person name="Delcher A."/>
            <person name="Deng Z."/>
            <person name="Mays A.D."/>
            <person name="Dew I."/>
            <person name="Dietz S.M."/>
            <person name="Dodson K."/>
            <person name="Doup L.E."/>
            <person name="Downes M."/>
            <person name="Dugan-Rocha S."/>
            <person name="Dunkov B.C."/>
            <person name="Dunn P."/>
            <person name="Durbin K.J."/>
            <person name="Evangelista C.C."/>
            <person name="Ferraz C."/>
            <person name="Ferriera S."/>
            <person name="Fleischmann W."/>
            <person name="Fosler C."/>
            <person name="Gabrielian A.E."/>
            <person name="Garg N.S."/>
            <person name="Gelbart W.M."/>
            <person name="Glasser K."/>
            <person name="Glodek A."/>
            <person name="Gong F."/>
            <person name="Gorrell J.H."/>
            <person name="Gu Z."/>
            <person name="Guan P."/>
            <person name="Harris M."/>
            <person name="Harris N.L."/>
            <person name="Harvey D.A."/>
            <person name="Heiman T.J."/>
            <person name="Hernandez J.R."/>
            <person name="Houck J."/>
            <person name="Hostin D."/>
            <person name="Houston K.A."/>
            <person name="Howland T.J."/>
            <person name="Wei M.-H."/>
            <person name="Ibegwam C."/>
            <person name="Jalali M."/>
            <person name="Kalush F."/>
            <person name="Karpen G.H."/>
            <person name="Ke Z."/>
            <person name="Kennison J.A."/>
            <person name="Ketchum K.A."/>
            <person name="Kimmel B.E."/>
            <person name="Kodira C.D."/>
            <person name="Kraft C.L."/>
            <person name="Kravitz S."/>
            <person name="Kulp D."/>
            <person name="Lai Z."/>
            <person name="Lasko P."/>
            <person name="Lei Y."/>
            <person name="Levitsky A.A."/>
            <person name="Li J.H."/>
            <person name="Li Z."/>
            <person name="Liang Y."/>
            <person name="Lin X."/>
            <person name="Liu X."/>
            <person name="Mattei B."/>
            <person name="McIntosh T.C."/>
            <person name="McLeod M.P."/>
            <person name="McPherson D."/>
            <person name="Merkulov G."/>
            <person name="Milshina N.V."/>
            <person name="Mobarry C."/>
            <person name="Morris J."/>
            <person name="Moshrefi A."/>
            <person name="Mount S.M."/>
            <person name="Moy M."/>
            <person name="Murphy B."/>
            <person name="Murphy L."/>
            <person name="Muzny D.M."/>
            <person name="Nelson D.L."/>
            <person name="Nelson D.R."/>
            <person name="Nelson K.A."/>
            <person name="Nixon K."/>
            <person name="Nusskern D.R."/>
            <person name="Pacleb J.M."/>
            <person name="Palazzolo M."/>
            <person name="Pittman G.S."/>
            <person name="Pan S."/>
            <person name="Pollard J."/>
            <person name="Puri V."/>
            <person name="Reese M.G."/>
            <person name="Reinert K."/>
            <person name="Remington K."/>
            <person name="Saunders R.D.C."/>
            <person name="Scheeler F."/>
            <person name="Shen H."/>
            <person name="Shue B.C."/>
            <person name="Siden-Kiamos I."/>
            <person name="Simpson M."/>
            <person name="Skupski M.P."/>
            <person name="Smith T.J."/>
            <person name="Spier E."/>
            <person name="Spradling A.C."/>
            <person name="Stapleton M."/>
            <person name="Strong R."/>
            <person name="Sun E."/>
            <person name="Svirskas R."/>
            <person name="Tector C."/>
            <person name="Turner R."/>
            <person name="Venter E."/>
            <person name="Wang A.H."/>
            <person name="Wang X."/>
            <person name="Wang Z.-Y."/>
            <person name="Wassarman D.A."/>
            <person name="Weinstock G.M."/>
            <person name="Weissenbach J."/>
            <person name="Williams S.M."/>
            <person name="Woodage T."/>
            <person name="Worley K.C."/>
            <person name="Wu D."/>
            <person name="Yang S."/>
            <person name="Yao Q.A."/>
            <person name="Ye J."/>
            <person name="Yeh R.-F."/>
            <person name="Zaveri J.S."/>
            <person name="Zhan M."/>
            <person name="Zhang G."/>
            <person name="Zhao Q."/>
            <person name="Zheng L."/>
            <person name="Zheng X.H."/>
            <person name="Zhong F.N."/>
            <person name="Zhong W."/>
            <person name="Zhou X."/>
            <person name="Zhu S.C."/>
            <person name="Zhu X."/>
            <person name="Smith H.O."/>
            <person name="Gibbs R.A."/>
            <person name="Myers E.W."/>
            <person name="Rubin G.M."/>
            <person name="Venter J.C."/>
        </authorList>
    </citation>
    <scope>NUCLEOTIDE SEQUENCE [LARGE SCALE GENOMIC DNA]</scope>
    <source>
        <strain>Berkeley</strain>
    </source>
</reference>
<reference key="2">
    <citation type="journal article" date="2002" name="Genome Biol.">
        <title>Annotation of the Drosophila melanogaster euchromatic genome: a systematic review.</title>
        <authorList>
            <person name="Misra S."/>
            <person name="Crosby M.A."/>
            <person name="Mungall C.J."/>
            <person name="Matthews B.B."/>
            <person name="Campbell K.S."/>
            <person name="Hradecky P."/>
            <person name="Huang Y."/>
            <person name="Kaminker J.S."/>
            <person name="Millburn G.H."/>
            <person name="Prochnik S.E."/>
            <person name="Smith C.D."/>
            <person name="Tupy J.L."/>
            <person name="Whitfield E.J."/>
            <person name="Bayraktaroglu L."/>
            <person name="Berman B.P."/>
            <person name="Bettencourt B.R."/>
            <person name="Celniker S.E."/>
            <person name="de Grey A.D.N.J."/>
            <person name="Drysdale R.A."/>
            <person name="Harris N.L."/>
            <person name="Richter J."/>
            <person name="Russo S."/>
            <person name="Schroeder A.J."/>
            <person name="Shu S.Q."/>
            <person name="Stapleton M."/>
            <person name="Yamada C."/>
            <person name="Ashburner M."/>
            <person name="Gelbart W.M."/>
            <person name="Rubin G.M."/>
            <person name="Lewis S.E."/>
        </authorList>
    </citation>
    <scope>GENOME REANNOTATION</scope>
    <source>
        <strain>Berkeley</strain>
    </source>
</reference>
<reference key="3">
    <citation type="journal article" date="2002" name="Genome Biol.">
        <title>A Drosophila full-length cDNA resource.</title>
        <authorList>
            <person name="Stapleton M."/>
            <person name="Carlson J.W."/>
            <person name="Brokstein P."/>
            <person name="Yu C."/>
            <person name="Champe M."/>
            <person name="George R.A."/>
            <person name="Guarin H."/>
            <person name="Kronmiller B."/>
            <person name="Pacleb J.M."/>
            <person name="Park S."/>
            <person name="Wan K.H."/>
            <person name="Rubin G.M."/>
            <person name="Celniker S.E."/>
        </authorList>
    </citation>
    <scope>NUCLEOTIDE SEQUENCE [LARGE SCALE MRNA]</scope>
    <source>
        <strain>Berkeley</strain>
        <tissue>Embryo</tissue>
    </source>
</reference>
<reference key="4">
    <citation type="submission" date="1992-11" db="EMBL/GenBank/DDBJ databases">
        <authorList>
            <person name="Stewart M.J."/>
            <person name="Denell R."/>
        </authorList>
    </citation>
    <scope>NUCLEOTIDE SEQUENCE [MRNA] OF 1-240</scope>
</reference>
<reference key="5">
    <citation type="journal article" date="1993" name="Mol. Cell. Biol.">
        <title>Mutations in the Drosophila gene encoding ribosomal protein S6 cause tissue overgrowth.</title>
        <authorList>
            <person name="Stewart M.J."/>
            <person name="Denell R."/>
        </authorList>
    </citation>
    <scope>NUCLEOTIDE SEQUENCE [GENOMIC DNA] OF 1-35</scope>
</reference>
<reference key="6">
    <citation type="journal article" date="2008" name="J. Proteome Res.">
        <title>Phosphoproteome analysis of Drosophila melanogaster embryos.</title>
        <authorList>
            <person name="Zhai B."/>
            <person name="Villen J."/>
            <person name="Beausoleil S.A."/>
            <person name="Mintseris J."/>
            <person name="Gygi S.P."/>
        </authorList>
    </citation>
    <scope>PHOSPHORYLATION [LARGE SCALE ANALYSIS] AT THR-145; SER-148 AND SER-152</scope>
    <scope>IDENTIFICATION BY MASS SPECTROMETRY</scope>
    <source>
        <tissue>Embryo</tissue>
    </source>
</reference>
<sequence length="436" mass="49967">MGKPKKANVATIKNVNLEKQITEGRVAKNKNKDKVKLRAEESANIDARSSQKILAAAKLQQLELDEENFPSLVTVKKVNFSLNDGHVKEDEEVNETDLMADLDMDEDDVAAFERFQQPAQEGKRTLHLSKMIMQKIQEKEADIHTKISDEGSLKIEEIDPKVKEMYEGVRDVLKRYRSGKIPKAFKIIPKLRNWEQILFITEPHNWSAAAMFQGTRIFCSVLSQAMAQRFYNLVLLPRVRDDLCEYKKLNMHLYNALKRALFKPAAFMKGIILPLLEGGDCTLREAIIFGSVVARSSIPVLHSSACLLKICEMAYSGANSIFIRYFLDKRYALPYRVVDAAVFHFLRFENDKRELPVLWHQSLLTFAQRYKNDISSEQRDALLQLLKKKSHFKITPDVRRELQAASCRDVEMMETDNGLAGQPAKMYTDADVEYEG</sequence>
<name>BYS_DROME</name>
<evidence type="ECO:0000250" key="1">
    <source>
        <dbReference type="UniProtKB" id="Q13895"/>
    </source>
</evidence>
<evidence type="ECO:0000269" key="2">
    <source>
    </source>
</evidence>
<evidence type="ECO:0000305" key="3"/>
<feature type="chain" id="PRO_0000186116" description="Bystin">
    <location>
        <begin position="1"/>
        <end position="436"/>
    </location>
</feature>
<feature type="modified residue" description="Phosphothreonine" evidence="2">
    <location>
        <position position="145"/>
    </location>
</feature>
<feature type="modified residue" description="Phosphoserine" evidence="2">
    <location>
        <position position="148"/>
    </location>
</feature>
<feature type="modified residue" description="Phosphoserine" evidence="2">
    <location>
        <position position="152"/>
    </location>
</feature>
<feature type="sequence conflict" description="In Ref. 4; AAA28401." evidence="3" ref="4">
    <original>LSQAMAQRFYNLVLLPRVR</original>
    <variation>ARVAGNGPRGSITWCSCHE</variation>
    <location>
        <begin position="222"/>
        <end position="240"/>
    </location>
</feature>
<protein>
    <recommendedName>
        <fullName>Bystin</fullName>
    </recommendedName>
    <alternativeName>
        <fullName>Protein bys</fullName>
    </alternativeName>
</protein>
<keyword id="KW-0539">Nucleus</keyword>
<keyword id="KW-0597">Phosphoprotein</keyword>
<keyword id="KW-1185">Reference proteome</keyword>
<keyword id="KW-0690">Ribosome biogenesis</keyword>